<gene>
    <name evidence="1" type="primary">hisE</name>
    <name type="ordered locus">BMA2706</name>
</gene>
<comment type="catalytic activity">
    <reaction evidence="1">
        <text>1-(5-phospho-beta-D-ribosyl)-ATP + H2O = 1-(5-phospho-beta-D-ribosyl)-5'-AMP + diphosphate + H(+)</text>
        <dbReference type="Rhea" id="RHEA:22828"/>
        <dbReference type="ChEBI" id="CHEBI:15377"/>
        <dbReference type="ChEBI" id="CHEBI:15378"/>
        <dbReference type="ChEBI" id="CHEBI:33019"/>
        <dbReference type="ChEBI" id="CHEBI:59457"/>
        <dbReference type="ChEBI" id="CHEBI:73183"/>
        <dbReference type="EC" id="3.6.1.31"/>
    </reaction>
</comment>
<comment type="pathway">
    <text evidence="1">Amino-acid biosynthesis; L-histidine biosynthesis; L-histidine from 5-phospho-alpha-D-ribose 1-diphosphate: step 2/9.</text>
</comment>
<comment type="subcellular location">
    <subcellularLocation>
        <location evidence="1">Cytoplasm</location>
    </subcellularLocation>
</comment>
<comment type="similarity">
    <text evidence="1">Belongs to the PRA-PH family.</text>
</comment>
<organism>
    <name type="scientific">Burkholderia mallei (strain ATCC 23344)</name>
    <dbReference type="NCBI Taxonomy" id="243160"/>
    <lineage>
        <taxon>Bacteria</taxon>
        <taxon>Pseudomonadati</taxon>
        <taxon>Pseudomonadota</taxon>
        <taxon>Betaproteobacteria</taxon>
        <taxon>Burkholderiales</taxon>
        <taxon>Burkholderiaceae</taxon>
        <taxon>Burkholderia</taxon>
        <taxon>pseudomallei group</taxon>
    </lineage>
</organism>
<protein>
    <recommendedName>
        <fullName evidence="1">Phosphoribosyl-ATP pyrophosphatase</fullName>
        <shortName evidence="1">PRA-PH</shortName>
        <ecNumber evidence="1">3.6.1.31</ecNumber>
    </recommendedName>
</protein>
<reference key="1">
    <citation type="journal article" date="2004" name="Proc. Natl. Acad. Sci. U.S.A.">
        <title>Structural flexibility in the Burkholderia mallei genome.</title>
        <authorList>
            <person name="Nierman W.C."/>
            <person name="DeShazer D."/>
            <person name="Kim H.S."/>
            <person name="Tettelin H."/>
            <person name="Nelson K.E."/>
            <person name="Feldblyum T.V."/>
            <person name="Ulrich R.L."/>
            <person name="Ronning C.M."/>
            <person name="Brinkac L.M."/>
            <person name="Daugherty S.C."/>
            <person name="Davidsen T.D."/>
            <person name="DeBoy R.T."/>
            <person name="Dimitrov G."/>
            <person name="Dodson R.J."/>
            <person name="Durkin A.S."/>
            <person name="Gwinn M.L."/>
            <person name="Haft D.H."/>
            <person name="Khouri H.M."/>
            <person name="Kolonay J.F."/>
            <person name="Madupu R."/>
            <person name="Mohammoud Y."/>
            <person name="Nelson W.C."/>
            <person name="Radune D."/>
            <person name="Romero C.M."/>
            <person name="Sarria S."/>
            <person name="Selengut J."/>
            <person name="Shamblin C."/>
            <person name="Sullivan S.A."/>
            <person name="White O."/>
            <person name="Yu Y."/>
            <person name="Zafar N."/>
            <person name="Zhou L."/>
            <person name="Fraser C.M."/>
        </authorList>
    </citation>
    <scope>NUCLEOTIDE SEQUENCE [LARGE SCALE GENOMIC DNA]</scope>
    <source>
        <strain>ATCC 23344</strain>
    </source>
</reference>
<evidence type="ECO:0000255" key="1">
    <source>
        <dbReference type="HAMAP-Rule" id="MF_01020"/>
    </source>
</evidence>
<feature type="chain" id="PRO_0000230170" description="Phosphoribosyl-ATP pyrophosphatase">
    <location>
        <begin position="1"/>
        <end position="122"/>
    </location>
</feature>
<keyword id="KW-0028">Amino-acid biosynthesis</keyword>
<keyword id="KW-0067">ATP-binding</keyword>
<keyword id="KW-0963">Cytoplasm</keyword>
<keyword id="KW-0368">Histidine biosynthesis</keyword>
<keyword id="KW-0378">Hydrolase</keyword>
<keyword id="KW-0547">Nucleotide-binding</keyword>
<keyword id="KW-1185">Reference proteome</keyword>
<dbReference type="EC" id="3.6.1.31" evidence="1"/>
<dbReference type="EMBL" id="CP000010">
    <property type="protein sequence ID" value="AAU48275.1"/>
    <property type="molecule type" value="Genomic_DNA"/>
</dbReference>
<dbReference type="RefSeq" id="WP_004202813.1">
    <property type="nucleotide sequence ID" value="NC_006348.1"/>
</dbReference>
<dbReference type="RefSeq" id="YP_104227.1">
    <property type="nucleotide sequence ID" value="NC_006348.1"/>
</dbReference>
<dbReference type="SMR" id="Q62GE7"/>
<dbReference type="KEGG" id="bma:BMA2706"/>
<dbReference type="PATRIC" id="fig|243160.12.peg.2776"/>
<dbReference type="eggNOG" id="COG0140">
    <property type="taxonomic scope" value="Bacteria"/>
</dbReference>
<dbReference type="HOGENOM" id="CLU_123337_1_2_4"/>
<dbReference type="UniPathway" id="UPA00031">
    <property type="reaction ID" value="UER00007"/>
</dbReference>
<dbReference type="Proteomes" id="UP000006693">
    <property type="component" value="Chromosome 1"/>
</dbReference>
<dbReference type="GO" id="GO:0005737">
    <property type="term" value="C:cytoplasm"/>
    <property type="evidence" value="ECO:0007669"/>
    <property type="project" value="UniProtKB-SubCell"/>
</dbReference>
<dbReference type="GO" id="GO:0005524">
    <property type="term" value="F:ATP binding"/>
    <property type="evidence" value="ECO:0007669"/>
    <property type="project" value="UniProtKB-KW"/>
</dbReference>
<dbReference type="GO" id="GO:0004636">
    <property type="term" value="F:phosphoribosyl-ATP diphosphatase activity"/>
    <property type="evidence" value="ECO:0007669"/>
    <property type="project" value="UniProtKB-UniRule"/>
</dbReference>
<dbReference type="GO" id="GO:0000105">
    <property type="term" value="P:L-histidine biosynthetic process"/>
    <property type="evidence" value="ECO:0007669"/>
    <property type="project" value="UniProtKB-UniRule"/>
</dbReference>
<dbReference type="CDD" id="cd11534">
    <property type="entry name" value="NTP-PPase_HisIE_like"/>
    <property type="match status" value="1"/>
</dbReference>
<dbReference type="Gene3D" id="1.10.287.1080">
    <property type="entry name" value="MazG-like"/>
    <property type="match status" value="1"/>
</dbReference>
<dbReference type="HAMAP" id="MF_01020">
    <property type="entry name" value="HisE"/>
    <property type="match status" value="1"/>
</dbReference>
<dbReference type="InterPro" id="IPR008179">
    <property type="entry name" value="HisE"/>
</dbReference>
<dbReference type="InterPro" id="IPR021130">
    <property type="entry name" value="PRib-ATP_PPHydrolase-like"/>
</dbReference>
<dbReference type="NCBIfam" id="TIGR03188">
    <property type="entry name" value="histidine_hisI"/>
    <property type="match status" value="1"/>
</dbReference>
<dbReference type="NCBIfam" id="NF001611">
    <property type="entry name" value="PRK00400.1-3"/>
    <property type="match status" value="1"/>
</dbReference>
<dbReference type="PANTHER" id="PTHR42945">
    <property type="entry name" value="HISTIDINE BIOSYNTHESIS BIFUNCTIONAL PROTEIN"/>
    <property type="match status" value="1"/>
</dbReference>
<dbReference type="PANTHER" id="PTHR42945:SF9">
    <property type="entry name" value="HISTIDINE BIOSYNTHESIS BIFUNCTIONAL PROTEIN HISIE"/>
    <property type="match status" value="1"/>
</dbReference>
<dbReference type="Pfam" id="PF01503">
    <property type="entry name" value="PRA-PH"/>
    <property type="match status" value="1"/>
</dbReference>
<dbReference type="SUPFAM" id="SSF101386">
    <property type="entry name" value="all-alpha NTP pyrophosphatases"/>
    <property type="match status" value="1"/>
</dbReference>
<name>HIS2_BURMA</name>
<proteinExistence type="inferred from homology"/>
<sequence>MTQSTTEDTLLRLAAVIDSRKGGDPEQSYVSRLFHKGDDAILKKIGEEATEVVLAAKDVRQGGAPSALVGEVADLWFHCLVALSHFDLSPADVIAELERREGMSGIEEKALRKRREREENGG</sequence>
<accession>Q62GE7</accession>